<feature type="chain" id="PRO_0000275944" description="Photosystem I P700 chlorophyll a apoprotein A1">
    <location>
        <begin position="1"/>
        <end position="750"/>
    </location>
</feature>
<feature type="transmembrane region" description="Helical; Name=I" evidence="1">
    <location>
        <begin position="70"/>
        <end position="93"/>
    </location>
</feature>
<feature type="transmembrane region" description="Helical; Name=II" evidence="1">
    <location>
        <begin position="156"/>
        <end position="179"/>
    </location>
</feature>
<feature type="transmembrane region" description="Helical; Name=III" evidence="1">
    <location>
        <begin position="195"/>
        <end position="219"/>
    </location>
</feature>
<feature type="transmembrane region" description="Helical; Name=IV" evidence="1">
    <location>
        <begin position="291"/>
        <end position="309"/>
    </location>
</feature>
<feature type="transmembrane region" description="Helical; Name=V" evidence="1">
    <location>
        <begin position="346"/>
        <end position="369"/>
    </location>
</feature>
<feature type="transmembrane region" description="Helical; Name=VI" evidence="1">
    <location>
        <begin position="385"/>
        <end position="411"/>
    </location>
</feature>
<feature type="transmembrane region" description="Helical; Name=VII" evidence="1">
    <location>
        <begin position="433"/>
        <end position="455"/>
    </location>
</feature>
<feature type="transmembrane region" description="Helical; Name=VIII" evidence="1">
    <location>
        <begin position="531"/>
        <end position="549"/>
    </location>
</feature>
<feature type="transmembrane region" description="Helical; Name=IX" evidence="1">
    <location>
        <begin position="589"/>
        <end position="610"/>
    </location>
</feature>
<feature type="transmembrane region" description="Helical; Name=X" evidence="1">
    <location>
        <begin position="664"/>
        <end position="686"/>
    </location>
</feature>
<feature type="transmembrane region" description="Helical; Name=XI" evidence="1">
    <location>
        <begin position="724"/>
        <end position="744"/>
    </location>
</feature>
<feature type="binding site" evidence="1">
    <location>
        <position position="573"/>
    </location>
    <ligand>
        <name>[4Fe-4S] cluster</name>
        <dbReference type="ChEBI" id="CHEBI:49883"/>
        <note>ligand shared between dimeric partners</note>
    </ligand>
</feature>
<feature type="binding site" evidence="1">
    <location>
        <position position="582"/>
    </location>
    <ligand>
        <name>[4Fe-4S] cluster</name>
        <dbReference type="ChEBI" id="CHEBI:49883"/>
        <note>ligand shared between dimeric partners</note>
    </ligand>
</feature>
<feature type="binding site" description="axial binding residue" evidence="1">
    <location>
        <position position="675"/>
    </location>
    <ligand>
        <name>chlorophyll a'</name>
        <dbReference type="ChEBI" id="CHEBI:189419"/>
        <label>A1</label>
    </ligand>
    <ligandPart>
        <name>Mg</name>
        <dbReference type="ChEBI" id="CHEBI:25107"/>
    </ligandPart>
</feature>
<feature type="binding site" description="axial binding residue" evidence="1">
    <location>
        <position position="683"/>
    </location>
    <ligand>
        <name>chlorophyll a</name>
        <dbReference type="ChEBI" id="CHEBI:58416"/>
        <label>A3</label>
    </ligand>
    <ligandPart>
        <name>Mg</name>
        <dbReference type="ChEBI" id="CHEBI:25107"/>
    </ligandPart>
</feature>
<feature type="binding site" evidence="1">
    <location>
        <position position="691"/>
    </location>
    <ligand>
        <name>chlorophyll a</name>
        <dbReference type="ChEBI" id="CHEBI:58416"/>
        <label>A3</label>
    </ligand>
</feature>
<feature type="binding site" evidence="1">
    <location>
        <position position="692"/>
    </location>
    <ligand>
        <name>phylloquinone</name>
        <dbReference type="ChEBI" id="CHEBI:18067"/>
        <label>A</label>
    </ligand>
</feature>
<accession>Q2PMU3</accession>
<sequence length="750" mass="83488">MIIRSPEPEVKILVDRDPIKTSFEEWAKPGHFSRTIAKGPDTTTWIWNLHADAHDFDSHTNDLEEISRKVFSAHFGQLSIIFLWLSGMYFHGARFSNYEAWLSDPTHIRPSAQVVWPIVGQEILNGDVGGGFRGIQITSGFFQIWRASGITSELQLYCTAIGALVFAALMLFAGWFHYHKAAPKLAWFQDVESMLNHHLTGLLGLGSLSWAGHQIHVSLPINQFLNAAVDPKEIPLPHEFILNRDLLAQLYPSFAEGATPFFTLNWSKYAEFLTFRGGLDPVTGGLWLTDIIHHHLAIAILFLIAGHMYRTNWGIGHSIKDILEAHKGPFTGQGHKGLYEILTTSWHAQLSINLAMLGSLTIVVAHHMYSMPPYPYLATDYGTQLSLFTHHMWIGGFLIVGAAAHAAIFMVRDYDPTIRYNDLLDRVLRHRDAIISHLNWVCIFLGFHSFGLYIHNDTMSALGRPQDMFSDTAIQLQPVFAQWIQNTHALAPGTTAPGATTSTSLTWGGDNLVAVGGKVALLPIPLGTADFLVHHIHAFTIHVTVLILLKGVLFARSSRLIPDKANLGFRFPCDGPGRGGTCQVSAWDHVFLGLFWMYNSISVVIFHFSWKMQSDVWGSISDQGIVNHITGGNFAQSSITINGWLRDFLWAQASQVIQSYGSSLSAYGLFFLGAHFVWAFSLMFLFSGRGYWQELIESIVWAHNKLKVAPATQPRALSIVQGRAVGVTHYLLGGIATTWAFFLARIIAVG</sequence>
<geneLocation type="chloroplast"/>
<proteinExistence type="inferred from homology"/>
<gene>
    <name evidence="1" type="primary">psaA</name>
</gene>
<evidence type="ECO:0000255" key="1">
    <source>
        <dbReference type="HAMAP-Rule" id="MF_00458"/>
    </source>
</evidence>
<name>PSAA_SOYBN</name>
<organism>
    <name type="scientific">Glycine max</name>
    <name type="common">Soybean</name>
    <name type="synonym">Glycine hispida</name>
    <dbReference type="NCBI Taxonomy" id="3847"/>
    <lineage>
        <taxon>Eukaryota</taxon>
        <taxon>Viridiplantae</taxon>
        <taxon>Streptophyta</taxon>
        <taxon>Embryophyta</taxon>
        <taxon>Tracheophyta</taxon>
        <taxon>Spermatophyta</taxon>
        <taxon>Magnoliopsida</taxon>
        <taxon>eudicotyledons</taxon>
        <taxon>Gunneridae</taxon>
        <taxon>Pentapetalae</taxon>
        <taxon>rosids</taxon>
        <taxon>fabids</taxon>
        <taxon>Fabales</taxon>
        <taxon>Fabaceae</taxon>
        <taxon>Papilionoideae</taxon>
        <taxon>50 kb inversion clade</taxon>
        <taxon>NPAAA clade</taxon>
        <taxon>indigoferoid/millettioid clade</taxon>
        <taxon>Phaseoleae</taxon>
        <taxon>Glycine</taxon>
        <taxon>Glycine subgen. Soja</taxon>
    </lineage>
</organism>
<protein>
    <recommendedName>
        <fullName evidence="1">Photosystem I P700 chlorophyll a apoprotein A1</fullName>
        <ecNumber evidence="1">1.97.1.12</ecNumber>
    </recommendedName>
    <alternativeName>
        <fullName evidence="1">PSI-A</fullName>
    </alternativeName>
    <alternativeName>
        <fullName evidence="1">PsaA</fullName>
    </alternativeName>
</protein>
<keyword id="KW-0004">4Fe-4S</keyword>
<keyword id="KW-0148">Chlorophyll</keyword>
<keyword id="KW-0150">Chloroplast</keyword>
<keyword id="KW-0157">Chromophore</keyword>
<keyword id="KW-0249">Electron transport</keyword>
<keyword id="KW-0408">Iron</keyword>
<keyword id="KW-0411">Iron-sulfur</keyword>
<keyword id="KW-0460">Magnesium</keyword>
<keyword id="KW-0472">Membrane</keyword>
<keyword id="KW-0479">Metal-binding</keyword>
<keyword id="KW-0560">Oxidoreductase</keyword>
<keyword id="KW-0602">Photosynthesis</keyword>
<keyword id="KW-0603">Photosystem I</keyword>
<keyword id="KW-0934">Plastid</keyword>
<keyword id="KW-1185">Reference proteome</keyword>
<keyword id="KW-0793">Thylakoid</keyword>
<keyword id="KW-0812">Transmembrane</keyword>
<keyword id="KW-1133">Transmembrane helix</keyword>
<keyword id="KW-0813">Transport</keyword>
<reference key="1">
    <citation type="journal article" date="2005" name="Plant Mol. Biol.">
        <title>Complete chloroplast genome sequence of Glycine max and comparative analyses with other legume genomes.</title>
        <authorList>
            <person name="Saski C."/>
            <person name="Lee S.-B."/>
            <person name="Daniell H."/>
            <person name="Wood T.C."/>
            <person name="Tomkins J."/>
            <person name="Kim H.-G."/>
            <person name="Jansen R.K."/>
        </authorList>
    </citation>
    <scope>NUCLEOTIDE SEQUENCE [LARGE SCALE GENOMIC DNA]</scope>
    <source>
        <strain>cv. PI 437654</strain>
    </source>
</reference>
<comment type="function">
    <text>PsaA and PsaB bind P700, the primary electron donor of photosystem I (PSI), as well as the electron acceptors A0, A1 and FX. PSI is a plastocyanin-ferredoxin oxidoreductase, converting photonic excitation into a charge separation, which transfers an electron from the donor P700 chlorophyll pair to the spectroscopically characterized acceptors A0, A1, FX, FA and FB in turn. Oxidized P700 is reduced on the lumenal side of the thylakoid membrane by plastocyanin.</text>
</comment>
<comment type="catalytic activity">
    <reaction evidence="1">
        <text>reduced [plastocyanin] + hnu + oxidized [2Fe-2S]-[ferredoxin] = oxidized [plastocyanin] + reduced [2Fe-2S]-[ferredoxin]</text>
        <dbReference type="Rhea" id="RHEA:30407"/>
        <dbReference type="Rhea" id="RHEA-COMP:10000"/>
        <dbReference type="Rhea" id="RHEA-COMP:10001"/>
        <dbReference type="Rhea" id="RHEA-COMP:10039"/>
        <dbReference type="Rhea" id="RHEA-COMP:10040"/>
        <dbReference type="ChEBI" id="CHEBI:29036"/>
        <dbReference type="ChEBI" id="CHEBI:30212"/>
        <dbReference type="ChEBI" id="CHEBI:33737"/>
        <dbReference type="ChEBI" id="CHEBI:33738"/>
        <dbReference type="ChEBI" id="CHEBI:49552"/>
        <dbReference type="EC" id="1.97.1.12"/>
    </reaction>
</comment>
<comment type="cofactor">
    <text evidence="1">P700 is a chlorophyll a/chlorophyll a' dimer, A0 is one or more chlorophyll a, A1 is one or both phylloquinones and FX is a shared 4Fe-4S iron-sulfur center.</text>
</comment>
<comment type="subunit">
    <text evidence="1">The PsaA/B heterodimer binds the P700 chlorophyll special pair and subsequent electron acceptors. PSI consists of a core antenna complex that captures photons, and an electron transfer chain that converts photonic excitation into a charge separation. The eukaryotic PSI reaction center is composed of at least 11 subunits.</text>
</comment>
<comment type="subcellular location">
    <subcellularLocation>
        <location evidence="1">Plastid</location>
        <location evidence="1">Chloroplast thylakoid membrane</location>
        <topology evidence="1">Multi-pass membrane protein</topology>
    </subcellularLocation>
</comment>
<comment type="similarity">
    <text evidence="1">Belongs to the PsaA/PsaB family.</text>
</comment>
<dbReference type="EC" id="1.97.1.12" evidence="1"/>
<dbReference type="EMBL" id="DQ317523">
    <property type="protein sequence ID" value="ABC25115.1"/>
    <property type="molecule type" value="Genomic_DNA"/>
</dbReference>
<dbReference type="RefSeq" id="YP_538755.1">
    <property type="nucleotide sequence ID" value="NC_007942.1"/>
</dbReference>
<dbReference type="SMR" id="Q2PMU3"/>
<dbReference type="FunCoup" id="Q2PMU3">
    <property type="interactions" value="485"/>
</dbReference>
<dbReference type="STRING" id="3847.Q2PMU3"/>
<dbReference type="PaxDb" id="3847-GLYMA11G16391.1"/>
<dbReference type="GeneID" id="3989266"/>
<dbReference type="KEGG" id="gmx:3989266"/>
<dbReference type="eggNOG" id="ENOG502QRYE">
    <property type="taxonomic scope" value="Eukaryota"/>
</dbReference>
<dbReference type="InParanoid" id="Q2PMU3"/>
<dbReference type="Proteomes" id="UP000008827">
    <property type="component" value="Chloroplast"/>
</dbReference>
<dbReference type="GO" id="GO:0009535">
    <property type="term" value="C:chloroplast thylakoid membrane"/>
    <property type="evidence" value="ECO:0007669"/>
    <property type="project" value="UniProtKB-SubCell"/>
</dbReference>
<dbReference type="GO" id="GO:0009522">
    <property type="term" value="C:photosystem I"/>
    <property type="evidence" value="ECO:0007669"/>
    <property type="project" value="UniProtKB-KW"/>
</dbReference>
<dbReference type="GO" id="GO:0051539">
    <property type="term" value="F:4 iron, 4 sulfur cluster binding"/>
    <property type="evidence" value="ECO:0007669"/>
    <property type="project" value="UniProtKB-KW"/>
</dbReference>
<dbReference type="GO" id="GO:0016168">
    <property type="term" value="F:chlorophyll binding"/>
    <property type="evidence" value="ECO:0007669"/>
    <property type="project" value="UniProtKB-KW"/>
</dbReference>
<dbReference type="GO" id="GO:0009055">
    <property type="term" value="F:electron transfer activity"/>
    <property type="evidence" value="ECO:0007669"/>
    <property type="project" value="UniProtKB-UniRule"/>
</dbReference>
<dbReference type="GO" id="GO:0000287">
    <property type="term" value="F:magnesium ion binding"/>
    <property type="evidence" value="ECO:0007669"/>
    <property type="project" value="UniProtKB-UniRule"/>
</dbReference>
<dbReference type="GO" id="GO:0016491">
    <property type="term" value="F:oxidoreductase activity"/>
    <property type="evidence" value="ECO:0007669"/>
    <property type="project" value="UniProtKB-KW"/>
</dbReference>
<dbReference type="GO" id="GO:0015979">
    <property type="term" value="P:photosynthesis"/>
    <property type="evidence" value="ECO:0007669"/>
    <property type="project" value="UniProtKB-UniRule"/>
</dbReference>
<dbReference type="FunFam" id="1.20.1130.10:FF:000001">
    <property type="entry name" value="Photosystem I P700 chlorophyll a apoprotein A2"/>
    <property type="match status" value="1"/>
</dbReference>
<dbReference type="Gene3D" id="1.20.1130.10">
    <property type="entry name" value="Photosystem I PsaA/PsaB"/>
    <property type="match status" value="1"/>
</dbReference>
<dbReference type="HAMAP" id="MF_00458">
    <property type="entry name" value="PSI_PsaA"/>
    <property type="match status" value="1"/>
</dbReference>
<dbReference type="InterPro" id="IPR006243">
    <property type="entry name" value="PSI_PsaA"/>
</dbReference>
<dbReference type="InterPro" id="IPR001280">
    <property type="entry name" value="PSI_PsaA/B"/>
</dbReference>
<dbReference type="InterPro" id="IPR020586">
    <property type="entry name" value="PSI_PsaA/B_CS"/>
</dbReference>
<dbReference type="InterPro" id="IPR036408">
    <property type="entry name" value="PSI_PsaA/B_sf"/>
</dbReference>
<dbReference type="NCBIfam" id="TIGR01335">
    <property type="entry name" value="psaA"/>
    <property type="match status" value="1"/>
</dbReference>
<dbReference type="PANTHER" id="PTHR30128">
    <property type="entry name" value="OUTER MEMBRANE PROTEIN, OMPA-RELATED"/>
    <property type="match status" value="1"/>
</dbReference>
<dbReference type="PANTHER" id="PTHR30128:SF19">
    <property type="entry name" value="PHOTOSYSTEM I P700 CHLOROPHYLL A APOPROTEIN A1-RELATED"/>
    <property type="match status" value="1"/>
</dbReference>
<dbReference type="Pfam" id="PF00223">
    <property type="entry name" value="PsaA_PsaB"/>
    <property type="match status" value="1"/>
</dbReference>
<dbReference type="PIRSF" id="PIRSF002905">
    <property type="entry name" value="PSI_A"/>
    <property type="match status" value="1"/>
</dbReference>
<dbReference type="PRINTS" id="PR00257">
    <property type="entry name" value="PHOTSYSPSAAB"/>
</dbReference>
<dbReference type="SUPFAM" id="SSF81558">
    <property type="entry name" value="Photosystem I subunits PsaA/PsaB"/>
    <property type="match status" value="1"/>
</dbReference>
<dbReference type="PROSITE" id="PS00419">
    <property type="entry name" value="PHOTOSYSTEM_I_PSAAB"/>
    <property type="match status" value="1"/>
</dbReference>